<reference key="1">
    <citation type="journal article" date="2007" name="Virology">
        <title>Genome of the Acidianus bottle-shaped virus and insights into the replication and packaging mechanisms.</title>
        <authorList>
            <person name="Peng X."/>
            <person name="Basta T."/>
            <person name="Haring M."/>
            <person name="Garrett R.A."/>
            <person name="Prangishvili D."/>
        </authorList>
    </citation>
    <scope>NUCLEOTIDE SEQUENCE [GENOMIC DNA]</scope>
</reference>
<dbReference type="EMBL" id="EF432053">
    <property type="protein sequence ID" value="ABP73417.1"/>
    <property type="molecule type" value="Genomic_DNA"/>
</dbReference>
<dbReference type="RefSeq" id="YP_001210331.1">
    <property type="nucleotide sequence ID" value="NC_009452.1"/>
</dbReference>
<dbReference type="GeneID" id="5129806"/>
<dbReference type="KEGG" id="vg:5129806"/>
<dbReference type="Proteomes" id="UP000000513">
    <property type="component" value="Segment"/>
</dbReference>
<dbReference type="GO" id="GO:0033644">
    <property type="term" value="C:host cell membrane"/>
    <property type="evidence" value="ECO:0007669"/>
    <property type="project" value="UniProtKB-SubCell"/>
</dbReference>
<dbReference type="GO" id="GO:0016020">
    <property type="term" value="C:membrane"/>
    <property type="evidence" value="ECO:0007669"/>
    <property type="project" value="UniProtKB-KW"/>
</dbReference>
<sequence>MSLIGLDLFDFVKGIVLLALTSGATYAIGKQFFSSNYCAIARIIQALLLFASSFLFDSAGALILGVIVLIIGVGNYLAETNSKFAFLDPNLA</sequence>
<organismHost>
    <name type="scientific">Acidianus convivator</name>
    <dbReference type="NCBI Taxonomy" id="269667"/>
</organismHost>
<comment type="subcellular location">
    <subcellularLocation>
        <location evidence="2">Host membrane</location>
        <topology evidence="2">Multi-pass membrane protein</topology>
    </subcellularLocation>
</comment>
<name>Y092_ABVP</name>
<evidence type="ECO:0000255" key="1"/>
<evidence type="ECO:0000305" key="2"/>
<accession>A4ZUB3</accession>
<gene>
    <name type="ORF">ORF92</name>
</gene>
<keyword id="KW-1043">Host membrane</keyword>
<keyword id="KW-0472">Membrane</keyword>
<keyword id="KW-1185">Reference proteome</keyword>
<keyword id="KW-0812">Transmembrane</keyword>
<keyword id="KW-1133">Transmembrane helix</keyword>
<feature type="chain" id="PRO_0000384843" description="Putative transmembrane protein ORF92">
    <location>
        <begin position="1"/>
        <end position="92"/>
    </location>
</feature>
<feature type="transmembrane region" description="Helical" evidence="1">
    <location>
        <begin position="11"/>
        <end position="28"/>
    </location>
</feature>
<feature type="transmembrane region" description="Helical" evidence="1">
    <location>
        <begin position="32"/>
        <end position="52"/>
    </location>
</feature>
<feature type="transmembrane region" description="Helical" evidence="1">
    <location>
        <begin position="54"/>
        <end position="74"/>
    </location>
</feature>
<proteinExistence type="predicted"/>
<protein>
    <recommendedName>
        <fullName>Putative transmembrane protein ORF92</fullName>
    </recommendedName>
</protein>
<organism>
    <name type="scientific">Acidianus bottle-shaped virus (isolate Italy/Pozzuoli)</name>
    <name type="common">ABV</name>
    <dbReference type="NCBI Taxonomy" id="654911"/>
    <lineage>
        <taxon>Viruses</taxon>
        <taxon>Viruses incertae sedis</taxon>
        <taxon>Ampullaviridae</taxon>
        <taxon>Bottigliavirus</taxon>
        <taxon>Bottigliavirus ABV</taxon>
    </lineage>
</organism>